<sequence>MKERSTELVQGFRHSVPYINAHRGKTFVVMLGGEAIEHENFSSIVNDIGLLHSLGIRLVVVYGARPQIDSNLADHNYEPIYHKHTRVTDARTLEMVKQAAGLLQLDITARLSMSLNNTPLQGAHINVVSGNFIIAQPLGVDDGVDYCHSGRIRRIDEEAIHRQLDNGAIVLLGPVAVSVTGESFNLTSEEVATQLAIKLKAEKMIGFCSSQGVTDSEGNIISELFPNDAQKRIEDLEQDGDYNSGTVRFLRGAVKACRSGVRRSHLLSYQEDGALIQELFSRDGIGTQIVMESAEQVRRATINDIGGILELIRPLEQQGILVRRSREQLEMEIDKFTIIERDNLTIACAALYPFPDEHIGEMACVAVHPDYRSSSRGEMLLNRITNQARQMGLKKLFVLTTRSIHWFQERGFTPAEVDVLPIQKQELYNYQRRSKILLADL</sequence>
<reference key="1">
    <citation type="submission" date="2008-02" db="EMBL/GenBank/DDBJ databases">
        <title>Complete sequence of Yersinia pseudotuberculosis YPIII.</title>
        <authorList>
            <consortium name="US DOE Joint Genome Institute"/>
            <person name="Copeland A."/>
            <person name="Lucas S."/>
            <person name="Lapidus A."/>
            <person name="Glavina del Rio T."/>
            <person name="Dalin E."/>
            <person name="Tice H."/>
            <person name="Bruce D."/>
            <person name="Goodwin L."/>
            <person name="Pitluck S."/>
            <person name="Munk A.C."/>
            <person name="Brettin T."/>
            <person name="Detter J.C."/>
            <person name="Han C."/>
            <person name="Tapia R."/>
            <person name="Schmutz J."/>
            <person name="Larimer F."/>
            <person name="Land M."/>
            <person name="Hauser L."/>
            <person name="Challacombe J.F."/>
            <person name="Green L."/>
            <person name="Lindler L.E."/>
            <person name="Nikolich M.P."/>
            <person name="Richardson P."/>
        </authorList>
    </citation>
    <scope>NUCLEOTIDE SEQUENCE [LARGE SCALE GENOMIC DNA]</scope>
    <source>
        <strain>YPIII</strain>
    </source>
</reference>
<protein>
    <recommendedName>
        <fullName evidence="1">Amino-acid acetyltransferase</fullName>
        <ecNumber evidence="1">2.3.1.1</ecNumber>
    </recommendedName>
    <alternativeName>
        <fullName evidence="1">N-acetylglutamate synthase</fullName>
        <shortName evidence="1">AGS</shortName>
        <shortName evidence="1">NAGS</shortName>
    </alternativeName>
</protein>
<comment type="catalytic activity">
    <reaction evidence="1">
        <text>L-glutamate + acetyl-CoA = N-acetyl-L-glutamate + CoA + H(+)</text>
        <dbReference type="Rhea" id="RHEA:24292"/>
        <dbReference type="ChEBI" id="CHEBI:15378"/>
        <dbReference type="ChEBI" id="CHEBI:29985"/>
        <dbReference type="ChEBI" id="CHEBI:44337"/>
        <dbReference type="ChEBI" id="CHEBI:57287"/>
        <dbReference type="ChEBI" id="CHEBI:57288"/>
        <dbReference type="EC" id="2.3.1.1"/>
    </reaction>
</comment>
<comment type="pathway">
    <text evidence="1">Amino-acid biosynthesis; L-arginine biosynthesis; N(2)-acetyl-L-ornithine from L-glutamate: step 1/4.</text>
</comment>
<comment type="subunit">
    <text evidence="1">Homohexamer.</text>
</comment>
<comment type="subcellular location">
    <subcellularLocation>
        <location evidence="1">Cytoplasm</location>
    </subcellularLocation>
</comment>
<comment type="similarity">
    <text evidence="1">Belongs to the acetyltransferase family. ArgA subfamily.</text>
</comment>
<proteinExistence type="inferred from homology"/>
<feature type="chain" id="PRO_1000137057" description="Amino-acid acetyltransferase">
    <location>
        <begin position="1"/>
        <end position="441"/>
    </location>
</feature>
<feature type="domain" description="N-acetyltransferase" evidence="1">
    <location>
        <begin position="295"/>
        <end position="434"/>
    </location>
</feature>
<keyword id="KW-0012">Acyltransferase</keyword>
<keyword id="KW-0028">Amino-acid biosynthesis</keyword>
<keyword id="KW-0055">Arginine biosynthesis</keyword>
<keyword id="KW-0963">Cytoplasm</keyword>
<keyword id="KW-0808">Transferase</keyword>
<dbReference type="EC" id="2.3.1.1" evidence="1"/>
<dbReference type="EMBL" id="CP000950">
    <property type="protein sequence ID" value="ACA67346.1"/>
    <property type="molecule type" value="Genomic_DNA"/>
</dbReference>
<dbReference type="RefSeq" id="WP_002211624.1">
    <property type="nucleotide sequence ID" value="NZ_CP009792.1"/>
</dbReference>
<dbReference type="SMR" id="B1JQD9"/>
<dbReference type="GeneID" id="96662393"/>
<dbReference type="KEGG" id="ypy:YPK_1045"/>
<dbReference type="PATRIC" id="fig|502800.11.peg.1677"/>
<dbReference type="UniPathway" id="UPA00068">
    <property type="reaction ID" value="UER00106"/>
</dbReference>
<dbReference type="GO" id="GO:0005737">
    <property type="term" value="C:cytoplasm"/>
    <property type="evidence" value="ECO:0007669"/>
    <property type="project" value="UniProtKB-SubCell"/>
</dbReference>
<dbReference type="GO" id="GO:0004042">
    <property type="term" value="F:L-glutamate N-acetyltransferase activity"/>
    <property type="evidence" value="ECO:0007669"/>
    <property type="project" value="UniProtKB-UniRule"/>
</dbReference>
<dbReference type="GO" id="GO:0006526">
    <property type="term" value="P:L-arginine biosynthetic process"/>
    <property type="evidence" value="ECO:0007669"/>
    <property type="project" value="UniProtKB-UniRule"/>
</dbReference>
<dbReference type="CDD" id="cd04237">
    <property type="entry name" value="AAK_NAGS-ABP"/>
    <property type="match status" value="1"/>
</dbReference>
<dbReference type="CDD" id="cd04301">
    <property type="entry name" value="NAT_SF"/>
    <property type="match status" value="1"/>
</dbReference>
<dbReference type="FunFam" id="3.40.1160.10:FF:000005">
    <property type="entry name" value="Amino-acid acetyltransferase"/>
    <property type="match status" value="1"/>
</dbReference>
<dbReference type="FunFam" id="3.40.630.30:FF:000009">
    <property type="entry name" value="Amino-acid acetyltransferase"/>
    <property type="match status" value="1"/>
</dbReference>
<dbReference type="Gene3D" id="3.40.630.30">
    <property type="match status" value="1"/>
</dbReference>
<dbReference type="Gene3D" id="3.40.1160.10">
    <property type="entry name" value="Acetylglutamate kinase-like"/>
    <property type="match status" value="1"/>
</dbReference>
<dbReference type="HAMAP" id="MF_01105">
    <property type="entry name" value="N_acetyl_glu_synth"/>
    <property type="match status" value="1"/>
</dbReference>
<dbReference type="InterPro" id="IPR036393">
    <property type="entry name" value="AceGlu_kinase-like_sf"/>
</dbReference>
<dbReference type="InterPro" id="IPR016181">
    <property type="entry name" value="Acyl_CoA_acyltransferase"/>
</dbReference>
<dbReference type="InterPro" id="IPR001048">
    <property type="entry name" value="Asp/Glu/Uridylate_kinase"/>
</dbReference>
<dbReference type="InterPro" id="IPR000182">
    <property type="entry name" value="GNAT_dom"/>
</dbReference>
<dbReference type="InterPro" id="IPR033719">
    <property type="entry name" value="NAGS_kin"/>
</dbReference>
<dbReference type="InterPro" id="IPR010167">
    <property type="entry name" value="NH2A_AcTrfase"/>
</dbReference>
<dbReference type="NCBIfam" id="TIGR01890">
    <property type="entry name" value="N-Ac-Glu-synth"/>
    <property type="match status" value="1"/>
</dbReference>
<dbReference type="NCBIfam" id="NF003641">
    <property type="entry name" value="PRK05279.1"/>
    <property type="match status" value="1"/>
</dbReference>
<dbReference type="PANTHER" id="PTHR30602">
    <property type="entry name" value="AMINO-ACID ACETYLTRANSFERASE"/>
    <property type="match status" value="1"/>
</dbReference>
<dbReference type="PANTHER" id="PTHR30602:SF12">
    <property type="entry name" value="AMINO-ACID ACETYLTRANSFERASE NAGS1, CHLOROPLASTIC-RELATED"/>
    <property type="match status" value="1"/>
</dbReference>
<dbReference type="Pfam" id="PF00696">
    <property type="entry name" value="AA_kinase"/>
    <property type="match status" value="1"/>
</dbReference>
<dbReference type="Pfam" id="PF00583">
    <property type="entry name" value="Acetyltransf_1"/>
    <property type="match status" value="1"/>
</dbReference>
<dbReference type="PIRSF" id="PIRSF000423">
    <property type="entry name" value="ArgA"/>
    <property type="match status" value="1"/>
</dbReference>
<dbReference type="SUPFAM" id="SSF55729">
    <property type="entry name" value="Acyl-CoA N-acyltransferases (Nat)"/>
    <property type="match status" value="1"/>
</dbReference>
<dbReference type="SUPFAM" id="SSF53633">
    <property type="entry name" value="Carbamate kinase-like"/>
    <property type="match status" value="1"/>
</dbReference>
<dbReference type="PROSITE" id="PS51186">
    <property type="entry name" value="GNAT"/>
    <property type="match status" value="1"/>
</dbReference>
<accession>B1JQD9</accession>
<evidence type="ECO:0000255" key="1">
    <source>
        <dbReference type="HAMAP-Rule" id="MF_01105"/>
    </source>
</evidence>
<name>ARGA_YERPY</name>
<organism>
    <name type="scientific">Yersinia pseudotuberculosis serotype O:3 (strain YPIII)</name>
    <dbReference type="NCBI Taxonomy" id="502800"/>
    <lineage>
        <taxon>Bacteria</taxon>
        <taxon>Pseudomonadati</taxon>
        <taxon>Pseudomonadota</taxon>
        <taxon>Gammaproteobacteria</taxon>
        <taxon>Enterobacterales</taxon>
        <taxon>Yersiniaceae</taxon>
        <taxon>Yersinia</taxon>
    </lineage>
</organism>
<gene>
    <name evidence="1" type="primary">argA</name>
    <name type="ordered locus">YPK_1045</name>
</gene>